<comment type="function">
    <text>Important for the metabolism of amino acids and Krebs-cycle related organic acids. In plants, it is involved in nitrogen metabolism and in aspects of carbon and energy metabolism.</text>
</comment>
<comment type="catalytic activity">
    <reaction>
        <text>L-aspartate + 2-oxoglutarate = oxaloacetate + L-glutamate</text>
        <dbReference type="Rhea" id="RHEA:21824"/>
        <dbReference type="ChEBI" id="CHEBI:16452"/>
        <dbReference type="ChEBI" id="CHEBI:16810"/>
        <dbReference type="ChEBI" id="CHEBI:29985"/>
        <dbReference type="ChEBI" id="CHEBI:29991"/>
        <dbReference type="EC" id="2.6.1.1"/>
    </reaction>
</comment>
<comment type="cofactor">
    <cofactor>
        <name>pyridoxal 5'-phosphate</name>
        <dbReference type="ChEBI" id="CHEBI:597326"/>
    </cofactor>
</comment>
<comment type="subunit">
    <text>Homodimer.</text>
</comment>
<comment type="subcellular location">
    <subcellularLocation>
        <location>Cytoplasm</location>
    </subcellularLocation>
</comment>
<comment type="tissue specificity">
    <text>Nodules, roots, stems and leaves, in decreasing order of aspartate aminotransferase 1 concentration. Is the predominant aspartate aminotransferase isoenzyme in roots.</text>
</comment>
<comment type="miscellaneous">
    <text>In eukaryotes there are cytoplasmic, mitochondrial and chloroplastic isozymes.</text>
</comment>
<comment type="similarity">
    <text evidence="2">Belongs to the class-I pyridoxal-phosphate-dependent aminotransferase family.</text>
</comment>
<gene>
    <name type="primary">AAT-1</name>
</gene>
<accession>P28011</accession>
<accession>Q40324</accession>
<dbReference type="EC" id="2.6.1.1"/>
<dbReference type="EMBL" id="L25334">
    <property type="protein sequence ID" value="AAB46610.1"/>
    <property type="molecule type" value="Genomic_DNA"/>
</dbReference>
<dbReference type="EMBL" id="X61577">
    <property type="protein sequence ID" value="CAA43779.1"/>
    <property type="molecule type" value="mRNA"/>
</dbReference>
<dbReference type="PIR" id="S46315">
    <property type="entry name" value="S46315"/>
</dbReference>
<dbReference type="SMR" id="P28011"/>
<dbReference type="GO" id="GO:0005739">
    <property type="term" value="C:mitochondrion"/>
    <property type="evidence" value="ECO:0007669"/>
    <property type="project" value="TreeGrafter"/>
</dbReference>
<dbReference type="GO" id="GO:0004069">
    <property type="term" value="F:L-aspartate:2-oxoglutarate aminotransferase activity"/>
    <property type="evidence" value="ECO:0007669"/>
    <property type="project" value="UniProtKB-EC"/>
</dbReference>
<dbReference type="GO" id="GO:0030170">
    <property type="term" value="F:pyridoxal phosphate binding"/>
    <property type="evidence" value="ECO:0007669"/>
    <property type="project" value="InterPro"/>
</dbReference>
<dbReference type="GO" id="GO:0006520">
    <property type="term" value="P:amino acid metabolic process"/>
    <property type="evidence" value="ECO:0007669"/>
    <property type="project" value="InterPro"/>
</dbReference>
<dbReference type="GO" id="GO:0009058">
    <property type="term" value="P:biosynthetic process"/>
    <property type="evidence" value="ECO:0007669"/>
    <property type="project" value="InterPro"/>
</dbReference>
<dbReference type="CDD" id="cd00609">
    <property type="entry name" value="AAT_like"/>
    <property type="match status" value="1"/>
</dbReference>
<dbReference type="FunFam" id="3.40.640.10:FF:000052">
    <property type="entry name" value="Aspartate aminotransferase"/>
    <property type="match status" value="1"/>
</dbReference>
<dbReference type="FunFam" id="3.90.1150.10:FF:000001">
    <property type="entry name" value="Aspartate aminotransferase"/>
    <property type="match status" value="1"/>
</dbReference>
<dbReference type="Gene3D" id="3.90.1150.10">
    <property type="entry name" value="Aspartate Aminotransferase, domain 1"/>
    <property type="match status" value="1"/>
</dbReference>
<dbReference type="Gene3D" id="3.40.640.10">
    <property type="entry name" value="Type I PLP-dependent aspartate aminotransferase-like (Major domain)"/>
    <property type="match status" value="1"/>
</dbReference>
<dbReference type="InterPro" id="IPR004839">
    <property type="entry name" value="Aminotransferase_I/II_large"/>
</dbReference>
<dbReference type="InterPro" id="IPR000796">
    <property type="entry name" value="Asp_trans"/>
</dbReference>
<dbReference type="InterPro" id="IPR004838">
    <property type="entry name" value="NHTrfase_class1_PyrdxlP-BS"/>
</dbReference>
<dbReference type="InterPro" id="IPR015424">
    <property type="entry name" value="PyrdxlP-dep_Trfase"/>
</dbReference>
<dbReference type="InterPro" id="IPR015421">
    <property type="entry name" value="PyrdxlP-dep_Trfase_major"/>
</dbReference>
<dbReference type="InterPro" id="IPR015422">
    <property type="entry name" value="PyrdxlP-dep_Trfase_small"/>
</dbReference>
<dbReference type="NCBIfam" id="NF006719">
    <property type="entry name" value="PRK09257.1"/>
    <property type="match status" value="1"/>
</dbReference>
<dbReference type="PANTHER" id="PTHR11879">
    <property type="entry name" value="ASPARTATE AMINOTRANSFERASE"/>
    <property type="match status" value="1"/>
</dbReference>
<dbReference type="PANTHER" id="PTHR11879:SF57">
    <property type="entry name" value="ASPARTATE AMINOTRANSFERASE 3, CHLOROPLASTIC"/>
    <property type="match status" value="1"/>
</dbReference>
<dbReference type="Pfam" id="PF00155">
    <property type="entry name" value="Aminotran_1_2"/>
    <property type="match status" value="1"/>
</dbReference>
<dbReference type="PRINTS" id="PR00799">
    <property type="entry name" value="TRANSAMINASE"/>
</dbReference>
<dbReference type="SUPFAM" id="SSF53383">
    <property type="entry name" value="PLP-dependent transferases"/>
    <property type="match status" value="1"/>
</dbReference>
<dbReference type="PROSITE" id="PS00105">
    <property type="entry name" value="AA_TRANSFER_CLASS_1"/>
    <property type="match status" value="1"/>
</dbReference>
<protein>
    <recommendedName>
        <fullName>Aspartate aminotransferase 1</fullName>
        <ecNumber>2.6.1.1</ecNumber>
    </recommendedName>
    <alternativeName>
        <fullName>Transaminase A</fullName>
    </alternativeName>
</protein>
<feature type="chain" id="PRO_0000123870" description="Aspartate aminotransferase 1">
    <location>
        <begin position="1"/>
        <end position="418"/>
    </location>
</feature>
<feature type="modified residue" description="N6-(pyridoxal phosphate)lysine" evidence="1">
    <location>
        <position position="264"/>
    </location>
</feature>
<feature type="sequence conflict" description="In Ref. 2; CAA43779." evidence="2" ref="2">
    <original>SQ</original>
    <variation>RE</variation>
    <location>
        <begin position="3"/>
        <end position="4"/>
    </location>
</feature>
<feature type="sequence conflict" description="In Ref. 2; CAA43779." evidence="2" ref="2">
    <original>H</original>
    <variation>D</variation>
    <location>
        <position position="408"/>
    </location>
</feature>
<proteinExistence type="evidence at transcript level"/>
<sequence>MASQNITPSPTASSDSVFAHLVRAPEDPILGVTVAYNKDPSPIKLNLGVGAYRTEEGKPLVLDVVRRVERQLLNDMSRNKEYIPIVGLADFNKLSAKLIFGADSPAIQENRVTTVQGLSGTGSLRVGGEFLAKHYHQRIIYLPTPTWGNHTKVFNLAGLTVKTYRYYAPATRGLDFQGLLEDLGSAPSGSVVLLHACAHNPTGVDPTLEQWEQIRQLIRSKSLLPFFDSAYQGFASGSLDADAQPVRLFVADGGELLVAQSYAKNMGLYGERVGALSIVSKSADVSSRVESQLKLVIRPMYSSPPIHGASIVAAILKDRDLYNDWTIELKAMADRIINMRQQLFDALRARGTPGDWSHIIKQIGMFTFTGLNPEQVSILTKEYHIYLTSDGRISMAGLSSKTVPHLAHAIHAVVTRVA</sequence>
<evidence type="ECO:0000250" key="1"/>
<evidence type="ECO:0000305" key="2"/>
<reference key="1">
    <citation type="journal article" date="1994" name="Plant Mol. Biol.">
        <title>Genomic structure, expression and evolution of the alfalfa aspartate aminotransferase genes.</title>
        <authorList>
            <person name="Gregerson R.G."/>
            <person name="Miller S.S."/>
            <person name="Petrowski M."/>
            <person name="Gantt J.S."/>
            <person name="Vance C.P."/>
        </authorList>
    </citation>
    <scope>NUCLEOTIDE SEQUENCE [GENOMIC DNA]</scope>
    <source>
        <strain>cv. Saranac</strain>
        <tissue>Seedling</tissue>
    </source>
</reference>
<reference key="2">
    <citation type="journal article" date="1991" name="Mol. Gen. Genet.">
        <title>Isolation and analysis of a cDNA clone that encodes an alfalfa (Medicago sativa) aspartate aminotransferase.</title>
        <authorList>
            <person name="Udvardi M.K."/>
            <person name="Kahn M.L."/>
        </authorList>
    </citation>
    <scope>NUCLEOTIDE SEQUENCE [MRNA] OF 2-418</scope>
    <source>
        <strain>cv. Ladak</strain>
        <tissue>Leaf</tissue>
    </source>
</reference>
<name>AAT1_MEDSA</name>
<organism>
    <name type="scientific">Medicago sativa</name>
    <name type="common">Alfalfa</name>
    <dbReference type="NCBI Taxonomy" id="3879"/>
    <lineage>
        <taxon>Eukaryota</taxon>
        <taxon>Viridiplantae</taxon>
        <taxon>Streptophyta</taxon>
        <taxon>Embryophyta</taxon>
        <taxon>Tracheophyta</taxon>
        <taxon>Spermatophyta</taxon>
        <taxon>Magnoliopsida</taxon>
        <taxon>eudicotyledons</taxon>
        <taxon>Gunneridae</taxon>
        <taxon>Pentapetalae</taxon>
        <taxon>rosids</taxon>
        <taxon>fabids</taxon>
        <taxon>Fabales</taxon>
        <taxon>Fabaceae</taxon>
        <taxon>Papilionoideae</taxon>
        <taxon>50 kb inversion clade</taxon>
        <taxon>NPAAA clade</taxon>
        <taxon>Hologalegina</taxon>
        <taxon>IRL clade</taxon>
        <taxon>Trifolieae</taxon>
        <taxon>Medicago</taxon>
    </lineage>
</organism>
<keyword id="KW-0032">Aminotransferase</keyword>
<keyword id="KW-0963">Cytoplasm</keyword>
<keyword id="KW-0663">Pyridoxal phosphate</keyword>
<keyword id="KW-0808">Transferase</keyword>